<reference key="1">
    <citation type="journal article" date="2004" name="Nat. Biotechnol.">
        <title>The genome sequence of the anaerobic, sulfate-reducing bacterium Desulfovibrio vulgaris Hildenborough.</title>
        <authorList>
            <person name="Heidelberg J.F."/>
            <person name="Seshadri R."/>
            <person name="Haveman S.A."/>
            <person name="Hemme C.L."/>
            <person name="Paulsen I.T."/>
            <person name="Kolonay J.F."/>
            <person name="Eisen J.A."/>
            <person name="Ward N.L."/>
            <person name="Methe B.A."/>
            <person name="Brinkac L.M."/>
            <person name="Daugherty S.C."/>
            <person name="DeBoy R.T."/>
            <person name="Dodson R.J."/>
            <person name="Durkin A.S."/>
            <person name="Madupu R."/>
            <person name="Nelson W.C."/>
            <person name="Sullivan S.A."/>
            <person name="Fouts D.E."/>
            <person name="Haft D.H."/>
            <person name="Selengut J."/>
            <person name="Peterson J.D."/>
            <person name="Davidsen T.M."/>
            <person name="Zafar N."/>
            <person name="Zhou L."/>
            <person name="Radune D."/>
            <person name="Dimitrov G."/>
            <person name="Hance M."/>
            <person name="Tran K."/>
            <person name="Khouri H.M."/>
            <person name="Gill J."/>
            <person name="Utterback T.R."/>
            <person name="Feldblyum T.V."/>
            <person name="Wall J.D."/>
            <person name="Voordouw G."/>
            <person name="Fraser C.M."/>
        </authorList>
    </citation>
    <scope>NUCLEOTIDE SEQUENCE [LARGE SCALE GENOMIC DNA]</scope>
    <source>
        <strain>ATCC 29579 / DSM 644 / CCUG 34227 / NCIMB 8303 / VKM B-1760 / Hildenborough</strain>
    </source>
</reference>
<feature type="chain" id="PRO_0000136476" description="Phosphoribosyl-AMP cyclohydrolase">
    <location>
        <begin position="1"/>
        <end position="126"/>
    </location>
</feature>
<feature type="binding site" evidence="1">
    <location>
        <position position="76"/>
    </location>
    <ligand>
        <name>Mg(2+)</name>
        <dbReference type="ChEBI" id="CHEBI:18420"/>
    </ligand>
</feature>
<feature type="binding site" evidence="1">
    <location>
        <position position="77"/>
    </location>
    <ligand>
        <name>Zn(2+)</name>
        <dbReference type="ChEBI" id="CHEBI:29105"/>
        <note>ligand shared between dimeric partners</note>
    </ligand>
</feature>
<feature type="binding site" evidence="1">
    <location>
        <position position="78"/>
    </location>
    <ligand>
        <name>Mg(2+)</name>
        <dbReference type="ChEBI" id="CHEBI:18420"/>
    </ligand>
</feature>
<feature type="binding site" evidence="1">
    <location>
        <position position="80"/>
    </location>
    <ligand>
        <name>Mg(2+)</name>
        <dbReference type="ChEBI" id="CHEBI:18420"/>
    </ligand>
</feature>
<feature type="binding site" evidence="1">
    <location>
        <position position="94"/>
    </location>
    <ligand>
        <name>Zn(2+)</name>
        <dbReference type="ChEBI" id="CHEBI:29105"/>
        <note>ligand shared between dimeric partners</note>
    </ligand>
</feature>
<feature type="binding site" evidence="1">
    <location>
        <position position="101"/>
    </location>
    <ligand>
        <name>Zn(2+)</name>
        <dbReference type="ChEBI" id="CHEBI:29105"/>
        <note>ligand shared between dimeric partners</note>
    </ligand>
</feature>
<keyword id="KW-0028">Amino-acid biosynthesis</keyword>
<keyword id="KW-0963">Cytoplasm</keyword>
<keyword id="KW-0368">Histidine biosynthesis</keyword>
<keyword id="KW-0378">Hydrolase</keyword>
<keyword id="KW-0460">Magnesium</keyword>
<keyword id="KW-0479">Metal-binding</keyword>
<keyword id="KW-1185">Reference proteome</keyword>
<keyword id="KW-0862">Zinc</keyword>
<organism>
    <name type="scientific">Nitratidesulfovibrio vulgaris (strain ATCC 29579 / DSM 644 / CCUG 34227 / NCIMB 8303 / VKM B-1760 / Hildenborough)</name>
    <name type="common">Desulfovibrio vulgaris</name>
    <dbReference type="NCBI Taxonomy" id="882"/>
    <lineage>
        <taxon>Bacteria</taxon>
        <taxon>Pseudomonadati</taxon>
        <taxon>Thermodesulfobacteriota</taxon>
        <taxon>Desulfovibrionia</taxon>
        <taxon>Desulfovibrionales</taxon>
        <taxon>Desulfovibrionaceae</taxon>
        <taxon>Nitratidesulfovibrio</taxon>
    </lineage>
</organism>
<gene>
    <name evidence="1" type="primary">hisI</name>
    <name type="ordered locus">DVU_0113</name>
</gene>
<dbReference type="EC" id="3.5.4.19" evidence="1"/>
<dbReference type="EMBL" id="AE017285">
    <property type="protein sequence ID" value="AAS94597.1"/>
    <property type="molecule type" value="Genomic_DNA"/>
</dbReference>
<dbReference type="RefSeq" id="WP_010937424.1">
    <property type="nucleotide sequence ID" value="NC_002937.3"/>
</dbReference>
<dbReference type="RefSeq" id="YP_009338.1">
    <property type="nucleotide sequence ID" value="NC_002937.3"/>
</dbReference>
<dbReference type="SMR" id="P62386"/>
<dbReference type="STRING" id="882.DVU_0113"/>
<dbReference type="PaxDb" id="882-DVU_0113"/>
<dbReference type="EnsemblBacteria" id="AAS94597">
    <property type="protein sequence ID" value="AAS94597"/>
    <property type="gene ID" value="DVU_0113"/>
</dbReference>
<dbReference type="KEGG" id="dvu:DVU_0113"/>
<dbReference type="PATRIC" id="fig|882.5.peg.111"/>
<dbReference type="eggNOG" id="COG0139">
    <property type="taxonomic scope" value="Bacteria"/>
</dbReference>
<dbReference type="HOGENOM" id="CLU_048577_5_0_7"/>
<dbReference type="OrthoDB" id="9795769at2"/>
<dbReference type="PhylomeDB" id="P62386"/>
<dbReference type="UniPathway" id="UPA00031">
    <property type="reaction ID" value="UER00008"/>
</dbReference>
<dbReference type="Proteomes" id="UP000002194">
    <property type="component" value="Chromosome"/>
</dbReference>
<dbReference type="GO" id="GO:0005737">
    <property type="term" value="C:cytoplasm"/>
    <property type="evidence" value="ECO:0007669"/>
    <property type="project" value="UniProtKB-SubCell"/>
</dbReference>
<dbReference type="GO" id="GO:0000287">
    <property type="term" value="F:magnesium ion binding"/>
    <property type="evidence" value="ECO:0007669"/>
    <property type="project" value="UniProtKB-UniRule"/>
</dbReference>
<dbReference type="GO" id="GO:0004635">
    <property type="term" value="F:phosphoribosyl-AMP cyclohydrolase activity"/>
    <property type="evidence" value="ECO:0007669"/>
    <property type="project" value="UniProtKB-UniRule"/>
</dbReference>
<dbReference type="GO" id="GO:0008270">
    <property type="term" value="F:zinc ion binding"/>
    <property type="evidence" value="ECO:0007669"/>
    <property type="project" value="UniProtKB-UniRule"/>
</dbReference>
<dbReference type="GO" id="GO:0000105">
    <property type="term" value="P:L-histidine biosynthetic process"/>
    <property type="evidence" value="ECO:0007669"/>
    <property type="project" value="UniProtKB-UniRule"/>
</dbReference>
<dbReference type="FunFam" id="3.10.20.810:FF:000001">
    <property type="entry name" value="Histidine biosynthesis bifunctional protein HisIE"/>
    <property type="match status" value="1"/>
</dbReference>
<dbReference type="Gene3D" id="4.10.80.70">
    <property type="match status" value="1"/>
</dbReference>
<dbReference type="Gene3D" id="3.10.20.810">
    <property type="entry name" value="Phosphoribosyl-AMP cyclohydrolase"/>
    <property type="match status" value="1"/>
</dbReference>
<dbReference type="HAMAP" id="MF_01021">
    <property type="entry name" value="HisI"/>
    <property type="match status" value="1"/>
</dbReference>
<dbReference type="InterPro" id="IPR026660">
    <property type="entry name" value="PRA-CH"/>
</dbReference>
<dbReference type="InterPro" id="IPR002496">
    <property type="entry name" value="PRib_AMP_CycHydrolase_dom"/>
</dbReference>
<dbReference type="InterPro" id="IPR038019">
    <property type="entry name" value="PRib_AMP_CycHydrolase_sf"/>
</dbReference>
<dbReference type="NCBIfam" id="NF000768">
    <property type="entry name" value="PRK00051.1"/>
    <property type="match status" value="1"/>
</dbReference>
<dbReference type="PANTHER" id="PTHR42945">
    <property type="entry name" value="HISTIDINE BIOSYNTHESIS BIFUNCTIONAL PROTEIN"/>
    <property type="match status" value="1"/>
</dbReference>
<dbReference type="PANTHER" id="PTHR42945:SF1">
    <property type="entry name" value="HISTIDINE BIOSYNTHESIS BIFUNCTIONAL PROTEIN HIS7"/>
    <property type="match status" value="1"/>
</dbReference>
<dbReference type="Pfam" id="PF01502">
    <property type="entry name" value="PRA-CH"/>
    <property type="match status" value="1"/>
</dbReference>
<dbReference type="SUPFAM" id="SSF141734">
    <property type="entry name" value="HisI-like"/>
    <property type="match status" value="1"/>
</dbReference>
<name>HIS3_NITV2</name>
<evidence type="ECO:0000255" key="1">
    <source>
        <dbReference type="HAMAP-Rule" id="MF_01021"/>
    </source>
</evidence>
<comment type="function">
    <text evidence="1">Catalyzes the hydrolysis of the adenine ring of phosphoribosyl-AMP.</text>
</comment>
<comment type="catalytic activity">
    <reaction evidence="1">
        <text>1-(5-phospho-beta-D-ribosyl)-5'-AMP + H2O = 1-(5-phospho-beta-D-ribosyl)-5-[(5-phospho-beta-D-ribosylamino)methylideneamino]imidazole-4-carboxamide</text>
        <dbReference type="Rhea" id="RHEA:20049"/>
        <dbReference type="ChEBI" id="CHEBI:15377"/>
        <dbReference type="ChEBI" id="CHEBI:58435"/>
        <dbReference type="ChEBI" id="CHEBI:59457"/>
        <dbReference type="EC" id="3.5.4.19"/>
    </reaction>
</comment>
<comment type="cofactor">
    <cofactor evidence="1">
        <name>Mg(2+)</name>
        <dbReference type="ChEBI" id="CHEBI:18420"/>
    </cofactor>
    <text evidence="1">Binds 1 Mg(2+) ion per subunit.</text>
</comment>
<comment type="cofactor">
    <cofactor evidence="1">
        <name>Zn(2+)</name>
        <dbReference type="ChEBI" id="CHEBI:29105"/>
    </cofactor>
    <text evidence="1">Binds 1 zinc ion per subunit.</text>
</comment>
<comment type="pathway">
    <text evidence="1">Amino-acid biosynthesis; L-histidine biosynthesis; L-histidine from 5-phospho-alpha-D-ribose 1-diphosphate: step 3/9.</text>
</comment>
<comment type="subunit">
    <text evidence="1">Homodimer.</text>
</comment>
<comment type="subcellular location">
    <subcellularLocation>
        <location evidence="1">Cytoplasm</location>
    </subcellularLocation>
</comment>
<comment type="similarity">
    <text evidence="1">Belongs to the PRA-CH family.</text>
</comment>
<proteinExistence type="inferred from homology"/>
<protein>
    <recommendedName>
        <fullName evidence="1">Phosphoribosyl-AMP cyclohydrolase</fullName>
        <shortName evidence="1">PRA-CH</shortName>
        <ecNumber evidence="1">3.5.4.19</ecNumber>
    </recommendedName>
</protein>
<accession>P62386</accession>
<sequence length="126" mass="13991">MTAFVPDFGKAGGLVPAIAQDADTGEVLMMAWMNAEAFEMTLKTGEAHYFSRSRGRLWHKGGTSGHTQHIRAVRLDCDSDTILLLVEQRGGAACHEGYRSCFYREMKDGEVSICSPKVFDPKEVYK</sequence>